<keyword id="KW-0489">Methyltransferase</keyword>
<keyword id="KW-0808">Transferase</keyword>
<reference key="1">
    <citation type="journal article" date="2017" name="Sci. Rep.">
        <title>Determination of the Genome and Primary Transcriptome of Syngas Fermenting Eubacterium limosum ATCC 8486.</title>
        <authorList>
            <person name="Song Y."/>
            <person name="Shin J."/>
            <person name="Jeong Y."/>
            <person name="Jin S."/>
            <person name="Lee J.K."/>
            <person name="Kim D.R."/>
            <person name="Kim S.C."/>
            <person name="Cho S."/>
            <person name="Cho B.K."/>
        </authorList>
    </citation>
    <scope>NUCLEOTIDE SEQUENCE [LARGE SCALE GENOMIC DNA]</scope>
    <source>
        <strain>ATCC 8486</strain>
    </source>
</reference>
<reference key="2">
    <citation type="journal article" date="2019" name="J. Biol. Chem.">
        <title>MtpB, a member of the MttB superfamily from the human intestinal acetogen Eubacterium limosum, catalyzes proline betaine demethylation.</title>
        <authorList>
            <person name="Picking J.W."/>
            <person name="Behrman E.J."/>
            <person name="Zhang L."/>
            <person name="Krzycki J.A."/>
        </authorList>
    </citation>
    <scope>FUNCTION</scope>
    <scope>CATALYTIC ACTIVITY</scope>
    <scope>BIOPHYSICOCHEMICAL PROPERTIES</scope>
    <scope>SUBUNIT</scope>
    <scope>INDUCTION</scope>
    <source>
        <strain>ATCC 8486</strain>
    </source>
</reference>
<evidence type="ECO:0000269" key="1">
    <source>
    </source>
</evidence>
<evidence type="ECO:0000303" key="2">
    <source>
    </source>
</evidence>
<evidence type="ECO:0000305" key="3"/>
<evidence type="ECO:0000312" key="4">
    <source>
        <dbReference type="EMBL" id="ARD64705.1"/>
    </source>
</evidence>
<gene>
    <name evidence="2" type="primary">mtpB</name>
    <name evidence="4" type="ORF">B2M23_03730</name>
</gene>
<sequence>MYVNRRFYDKYVSTRDVELLHEYSLRVLKEVGVSFDCEEALEIFKKHGATVEGSIVKIDEDLLNQALETAPKTFTITTSAGETKIGERYKPKTVGCYGPPKFLFEDDEYRVAKKDDMVKFLKLMDTSDVTDFVNNSAYDTPDLDKTKEDFYLPQVAMCLKYSQKPTYGNVANSMNVRGKSLKQEAKDIAKLYKEFYDIWDRPVLLTNTCALSPLGYSYEVLDNIMGLVEEGQPVTIITCSMTNLTAPAALLGSVIQNNATILAGIVLTQLINPGNPVIYGTVSTATDMRNVACSIGAPEAQLIQMASLALGRYYQLPVRTGIAGTDSLKPDYQAGVESFMILMTTYLGKSDFVLNHAGILQAYALGSYEKFVLDEEVNRILLRLNRGIDISDVKAEKVFDAIKKAGPLGNYLSGRTPKEYRQEHWLTKLFNRQAGNPQPIFDEIGDLRERASKEVEERVAGYTLPDLTKTQKDILNRYLPEDEKF</sequence>
<organism>
    <name type="scientific">Eubacterium limosum</name>
    <dbReference type="NCBI Taxonomy" id="1736"/>
    <lineage>
        <taxon>Bacteria</taxon>
        <taxon>Bacillati</taxon>
        <taxon>Bacillota</taxon>
        <taxon>Clostridia</taxon>
        <taxon>Eubacteriales</taxon>
        <taxon>Eubacteriaceae</taxon>
        <taxon>Eubacterium</taxon>
    </lineage>
</organism>
<name>MTPB_EUBLI</name>
<protein>
    <recommendedName>
        <fullName evidence="2">Proline betaine:corrinoid methyltransferase</fullName>
        <ecNumber evidence="1">2.1.1.-</ecNumber>
    </recommendedName>
</protein>
<dbReference type="EC" id="2.1.1.-" evidence="1"/>
<dbReference type="EMBL" id="CP019962">
    <property type="protein sequence ID" value="ARD64705.1"/>
    <property type="molecule type" value="Genomic_DNA"/>
</dbReference>
<dbReference type="RefSeq" id="WP_038353400.1">
    <property type="nucleotide sequence ID" value="NZ_QGUD01000005.1"/>
</dbReference>
<dbReference type="SMR" id="P0DX09"/>
<dbReference type="KEGG" id="elim:B2M23_03730"/>
<dbReference type="OrthoDB" id="5418352at2"/>
<dbReference type="Proteomes" id="UP000192391">
    <property type="component" value="Chromosome"/>
</dbReference>
<dbReference type="GO" id="GO:0008168">
    <property type="term" value="F:methyltransferase activity"/>
    <property type="evidence" value="ECO:0007669"/>
    <property type="project" value="UniProtKB-KW"/>
</dbReference>
<dbReference type="GO" id="GO:0015948">
    <property type="term" value="P:methanogenesis"/>
    <property type="evidence" value="ECO:0007669"/>
    <property type="project" value="InterPro"/>
</dbReference>
<dbReference type="GO" id="GO:0032259">
    <property type="term" value="P:methylation"/>
    <property type="evidence" value="ECO:0007669"/>
    <property type="project" value="UniProtKB-KW"/>
</dbReference>
<dbReference type="Gene3D" id="3.20.20.480">
    <property type="entry name" value="Trimethylamine methyltransferase-like"/>
    <property type="match status" value="1"/>
</dbReference>
<dbReference type="InterPro" id="IPR038601">
    <property type="entry name" value="MttB-like_sf"/>
</dbReference>
<dbReference type="InterPro" id="IPR010426">
    <property type="entry name" value="MTTB_MeTrfase"/>
</dbReference>
<dbReference type="Pfam" id="PF06253">
    <property type="entry name" value="MTTB"/>
    <property type="match status" value="1"/>
</dbReference>
<comment type="function">
    <text evidence="1">Involved in the degradation of the quaternary amine L-proline betaine (PubMed:31341018). Component of a corrinoid-dependent methyltransferase system that transfers a methyl group from L-proline betaine to tetrahydrofolate (THF), forming methyl-THF, a key intermediate in the Wood-Ljungdahl acetogenesis pathway (PubMed:31341018). MtpB catalyzes the methylation of the corrinoid protein MtqC, using L-proline betaine as the methyl donor (PubMed:31341018). Shows weak activity with some other quaternary amines, including carnitine, phosphocholine, glycine betaine or betonicine, but cannot methylate free cob(I)alamin (PubMed:31341018).</text>
</comment>
<comment type="catalytic activity">
    <reaction evidence="1">
        <text>Co(I)-[quaternary-amine-specific corrinoid protein] + L-proline betaine + H(+) = methyl-Co(III)-[quaternary-amine-specific corrinoid protein] + N-methyl-L-proline</text>
        <dbReference type="Rhea" id="RHEA:75879"/>
        <dbReference type="Rhea" id="RHEA-COMP:17694"/>
        <dbReference type="Rhea" id="RHEA-COMP:17695"/>
        <dbReference type="ChEBI" id="CHEBI:15378"/>
        <dbReference type="ChEBI" id="CHEBI:35280"/>
        <dbReference type="ChEBI" id="CHEBI:85033"/>
        <dbReference type="ChEBI" id="CHEBI:85035"/>
        <dbReference type="ChEBI" id="CHEBI:133743"/>
    </reaction>
    <physiologicalReaction direction="left-to-right" evidence="1">
        <dbReference type="Rhea" id="RHEA:75880"/>
    </physiologicalReaction>
</comment>
<comment type="biophysicochemical properties">
    <kinetics>
        <KM evidence="1">8 mM for proline betaine</KM>
        <Vmax evidence="1">3.1 umol/min/mg enzyme</Vmax>
        <text evidence="1">kcat is 170 min(-1).</text>
    </kinetics>
</comment>
<comment type="subunit">
    <text evidence="1">The proline betaine:THF methyl transfer system is composed of two methyltransferases, MtpB and MtqA, and the corrinoid protein MtqC.</text>
</comment>
<comment type="induction">
    <text evidence="1">Up-regulated during growth on proline betaine.</text>
</comment>
<comment type="similarity">
    <text evidence="3">Belongs to the trimethylamine methyltransferase family.</text>
</comment>
<accession>P0DX09</accession>
<feature type="chain" id="PRO_0000457581" description="Proline betaine:corrinoid methyltransferase">
    <location>
        <begin position="1"/>
        <end position="485"/>
    </location>
</feature>
<proteinExistence type="evidence at protein level"/>